<organism>
    <name type="scientific">Aspergillus sp. (strain MF297-2)</name>
    <dbReference type="NCBI Taxonomy" id="877550"/>
    <lineage>
        <taxon>Eukaryota</taxon>
        <taxon>Fungi</taxon>
        <taxon>Dikarya</taxon>
        <taxon>Ascomycota</taxon>
        <taxon>Pezizomycotina</taxon>
        <taxon>Eurotiomycetes</taxon>
        <taxon>Eurotiomycetidae</taxon>
        <taxon>Eurotiales</taxon>
        <taxon>Aspergillaceae</taxon>
        <taxon>Aspergillus</taxon>
    </lineage>
</organism>
<dbReference type="EC" id="1.14.12.-" evidence="7"/>
<dbReference type="EMBL" id="HM622670">
    <property type="protein sequence ID" value="ADM34135.1"/>
    <property type="status" value="ALT_SEQ"/>
    <property type="molecule type" value="Genomic_DNA"/>
</dbReference>
<dbReference type="SMR" id="E1ACP7"/>
<dbReference type="GlyCosmos" id="E1ACP7">
    <property type="glycosylation" value="1 site, No reported glycans"/>
</dbReference>
<dbReference type="GO" id="GO:0016020">
    <property type="term" value="C:membrane"/>
    <property type="evidence" value="ECO:0007669"/>
    <property type="project" value="UniProtKB-SubCell"/>
</dbReference>
<dbReference type="GO" id="GO:0071949">
    <property type="term" value="F:FAD binding"/>
    <property type="evidence" value="ECO:0007669"/>
    <property type="project" value="InterPro"/>
</dbReference>
<dbReference type="GO" id="GO:0004497">
    <property type="term" value="F:monooxygenase activity"/>
    <property type="evidence" value="ECO:0007669"/>
    <property type="project" value="UniProtKB-KW"/>
</dbReference>
<dbReference type="GO" id="GO:0009820">
    <property type="term" value="P:alkaloid metabolic process"/>
    <property type="evidence" value="ECO:0007669"/>
    <property type="project" value="UniProtKB-KW"/>
</dbReference>
<dbReference type="Gene3D" id="3.30.9.30">
    <property type="match status" value="1"/>
</dbReference>
<dbReference type="Gene3D" id="3.50.50.60">
    <property type="entry name" value="FAD/NAD(P)-binding domain"/>
    <property type="match status" value="1"/>
</dbReference>
<dbReference type="InterPro" id="IPR002938">
    <property type="entry name" value="FAD-bd"/>
</dbReference>
<dbReference type="InterPro" id="IPR050493">
    <property type="entry name" value="FAD-dep_Monooxygenase_BioMet"/>
</dbReference>
<dbReference type="InterPro" id="IPR036188">
    <property type="entry name" value="FAD/NAD-bd_sf"/>
</dbReference>
<dbReference type="PANTHER" id="PTHR13789">
    <property type="entry name" value="MONOOXYGENASE"/>
    <property type="match status" value="1"/>
</dbReference>
<dbReference type="PANTHER" id="PTHR13789:SF236">
    <property type="entry name" value="MONOOXYGENASE, PUTATIVE (AFU_ORTHOLOGUE AFUA_6G12060)-RELATED"/>
    <property type="match status" value="1"/>
</dbReference>
<dbReference type="Pfam" id="PF01494">
    <property type="entry name" value="FAD_binding_3"/>
    <property type="match status" value="2"/>
</dbReference>
<dbReference type="PRINTS" id="PR00420">
    <property type="entry name" value="RNGMNOXGNASE"/>
</dbReference>
<dbReference type="SUPFAM" id="SSF51905">
    <property type="entry name" value="FAD/NAD(P)-binding domain"/>
    <property type="match status" value="1"/>
</dbReference>
<name>NOTB_ASPSM</name>
<evidence type="ECO:0000250" key="1">
    <source>
        <dbReference type="UniProtKB" id="B8M9J8"/>
    </source>
</evidence>
<evidence type="ECO:0000250" key="2">
    <source>
        <dbReference type="UniProtKB" id="L0E4H0"/>
    </source>
</evidence>
<evidence type="ECO:0000255" key="3"/>
<evidence type="ECO:0000255" key="4">
    <source>
        <dbReference type="PROSITE-ProRule" id="PRU00498"/>
    </source>
</evidence>
<evidence type="ECO:0000269" key="5">
    <source>
    </source>
</evidence>
<evidence type="ECO:0000269" key="6">
    <source>
    </source>
</evidence>
<evidence type="ECO:0000269" key="7">
    <source>
    </source>
</evidence>
<evidence type="ECO:0000303" key="8">
    <source>
    </source>
</evidence>
<evidence type="ECO:0000303" key="9">
    <source>
    </source>
</evidence>
<evidence type="ECO:0000305" key="10"/>
<evidence type="ECO:0000305" key="11">
    <source>
    </source>
</evidence>
<sequence length="454" mass="49036">MTKSQVNTWGPAISSPAELTVIIVGLGIAGLTAAIECHRKGYTVIGLEKKPDANQLGDIIGLSGNSMRILAEWNNGSLAHLIDDDITCDVTALELFDAEGHQRLAMPYNANDPNQGYLFRRTGLLTKLCHYASQLGIDLRFGVNVDGYWETDSSAGVYANNEKITGDCVVAADGFHSKARAIITGETPAPEDIGVVAYRSIFDADAIADVPEAQWILKKAQTADIWHTYYAKDTMVAIGTAARGRYVHWGCAGALEDRSESWMQPAAPYPVLKCLESWPVGGQLAAAIARTPPGKCFQQALRAIPPLKRWVSTGGRMIVIGDAAHSFLPYAGQGGNQAIEDAAVLGICLELAGTPNVPLALRVVEKLRHGRVSLIQKGSVEAGDCFLDAAWESDDTAERPTAFTHQAWVYAHNCVEHAYKQFHAAAEAVINGREYTPTNVPTDGKFRQQDGKCM</sequence>
<accession>E1ACP7</accession>
<reference key="1">
    <citation type="journal article" date="2010" name="J. Am. Chem. Soc.">
        <title>Genome-based characterization of two prenylation steps in the assembly of the stephacidin and notoamide anticancer agents in a marine-derived Aspergillus sp.</title>
        <authorList>
            <person name="Ding Y."/>
            <person name="de Wet J.R."/>
            <person name="Cavalcoli J."/>
            <person name="Li S."/>
            <person name="Greshock T.J."/>
            <person name="Miller K.A."/>
            <person name="Finefield J.M."/>
            <person name="Sunderhaus J.D."/>
            <person name="McAfoos T.J."/>
            <person name="Tsukamoto S."/>
            <person name="Williams R.M."/>
            <person name="Sherman D.H."/>
        </authorList>
    </citation>
    <scope>NUCLEOTIDE SEQUENCE [GENOMIC DNA]</scope>
    <scope>FUNCTION</scope>
    <source>
        <strain>MF297-2</strain>
    </source>
</reference>
<reference key="2">
    <citation type="journal article" date="2007" name="Angew. Chem. Int. Ed.">
        <title>Notoamides A-D: prenylated indole alkaloids isolated from a marine-derived fungus, Aspergillus sp.</title>
        <authorList>
            <person name="Kato H."/>
            <person name="Yoshida T."/>
            <person name="Tokue T."/>
            <person name="Nojiri Y."/>
            <person name="Hirota H."/>
            <person name="Ohta T."/>
            <person name="Williams R.M."/>
            <person name="Tsukamoto S."/>
        </authorList>
    </citation>
    <scope>BIOTECHNOLOGY</scope>
</reference>
<reference key="3">
    <citation type="journal article" date="2012" name="J. Am. Chem. Soc.">
        <title>Biochemical characterization of NotB as an FAD-dependent oxidase in the biosynthesis of notoamide indole alkaloids.</title>
        <authorList>
            <person name="Li S."/>
            <person name="Finefield J.M."/>
            <person name="Sunderhaus J.D."/>
            <person name="McAfoos T.J."/>
            <person name="Williams R.M."/>
            <person name="Sherman D.H."/>
        </authorList>
    </citation>
    <scope>FUNCTION</scope>
    <scope>CATALYTIC ACTIVITY</scope>
    <scope>PATHWAY</scope>
</reference>
<reference key="4">
    <citation type="journal article" date="2012" name="Med. Chem. Commun.">
        <title>Comparative analysis of the biosynthetic systems for fungal bicyclo[2.2.2]diazaoctane indole alkaloids: the (+)/(-)-notoamide, paraherquamide and malbrancheamide pathways.</title>
        <authorList>
            <person name="Li S."/>
            <person name="Anand K."/>
            <person name="Tran H."/>
            <person name="Yu F."/>
            <person name="Finefield J.M."/>
            <person name="Sunderhaus J.D."/>
            <person name="McAfoos T.J."/>
            <person name="Tsukamoto S."/>
            <person name="Williams R.M."/>
            <person name="Sherman D.H."/>
        </authorList>
    </citation>
    <scope>FUNCTION</scope>
</reference>
<feature type="chain" id="PRO_0000448801" description="Notoamide E oxidase notB">
    <location>
        <begin position="1"/>
        <end position="454"/>
    </location>
</feature>
<feature type="transmembrane region" description="Helical" evidence="3">
    <location>
        <begin position="15"/>
        <end position="35"/>
    </location>
</feature>
<feature type="active site" evidence="2">
    <location>
        <position position="199"/>
    </location>
</feature>
<feature type="active site" evidence="1">
    <location>
        <position position="229"/>
    </location>
</feature>
<feature type="binding site" evidence="1">
    <location>
        <position position="48"/>
    </location>
    <ligand>
        <name>FAD</name>
        <dbReference type="ChEBI" id="CHEBI:57692"/>
    </ligand>
</feature>
<feature type="binding site" evidence="1">
    <location>
        <position position="61"/>
    </location>
    <ligand>
        <name>FAD</name>
        <dbReference type="ChEBI" id="CHEBI:57692"/>
    </ligand>
</feature>
<feature type="binding site" evidence="1">
    <location>
        <position position="121"/>
    </location>
    <ligand>
        <name>FAD</name>
        <dbReference type="ChEBI" id="CHEBI:57692"/>
    </ligand>
</feature>
<feature type="binding site" evidence="1">
    <location>
        <position position="322"/>
    </location>
    <ligand>
        <name>FAD</name>
        <dbReference type="ChEBI" id="CHEBI:57692"/>
    </ligand>
</feature>
<feature type="binding site" evidence="1">
    <location>
        <position position="335"/>
    </location>
    <ligand>
        <name>FAD</name>
        <dbReference type="ChEBI" id="CHEBI:57692"/>
    </ligand>
</feature>
<feature type="glycosylation site" description="N-linked (GlcNAc...) asparagine" evidence="4">
    <location>
        <position position="75"/>
    </location>
</feature>
<proteinExistence type="evidence at protein level"/>
<comment type="function">
    <text evidence="6 7 11">FAD-dependent monooxygenase; part of the gene cluster that mediates the biosynthesis of notoamide, a fungal indole alkaloid that belongs to a family of natural products containing a characteristic bicyclo[2.2.2]diazaoctane core (PubMed:20722388). The first step of notoamide biosynthesis involves coupling of L-proline and L-tryptophan by the bimodular NRPS notE, to produce cyclo-L-tryptophan-L-proline called brevianamide F (PubMed:20722388). The reverse prenyltransferase notF then acts as a deoxybrevianamide E synthase and converts brevianamide F to deoxybrevianamide E via reverse prenylation at C-2 of the indole ring leading to the bicyclo[2.2.2]diazaoctane core (PubMed:20722388). Deoxybrevianamide E is further hydroxylated at C-6 of the indole ring, likely catalyzed by the cytochrome P450 monooxygenase notG, to yield 6-hydroxy-deoxybrevianamide E (Probable). 6-hydroxy-deoxybrevianamide E is a specific substrate of the prenyltransferase notC for normal prenylation at C-7 to produce 6-hydroxy-7-prenyl-deoxybrevianamide, also called notoamide S (PubMed:20722388). As the proposed pivotal branching point in notoamide biosynthesis, notoamide S can be diverted to notoamide E through an oxidative pyran ring closure putatively catalyzed by either notH cytochrome P450 monooxygenase or the notD FAD-linked oxidoreductase (Probable). This step would be followed by an indole 2,3-epoxidation-initiated pinacol-like rearrangement catalyzed by the notB FAD-dependent monooxygenase leading to the formation of notoamide C and notoamide D (PubMed:22188465). On the other hand notoamide S is converted to notoamide T by notH (or notD), a bifunctional oxidase that also functions as the intramolecular Diels-Alderase responsible for generation of (+)-notoamide T (Probable). To generate antipodal (-)-notoaminide T, notH' (or notD') in Aspergillus versicolor is expected to catalyze a Diels-Alder reaction leading to the opposite stereochemistry (Probable). The remaining oxidoreductase notD (or notH) likely catalyzes the oxidative pyran ring formation to yield (+)-stephacidin A (Probable). The FAD-dependent monooxygenase notI is highly similar to notB and is predicted to catalyze a similar conversion from (+)-stephacidin A to (-)-notoamide B via the 2,3-epoxidation of (+)-stephacidin A followed by a pinacol-type rearrangement (Probable). Finally, it remains unclear which enzyme could be responsible for the final hydroxylation steps leading to notoamide A and sclerotiamide (Probable).</text>
</comment>
<comment type="catalytic activity">
    <reaction evidence="7">
        <text>notoamide E + NADPH + O2 + H(+) = notoamide C + NADP(+) + H2O</text>
        <dbReference type="Rhea" id="RHEA:62348"/>
        <dbReference type="ChEBI" id="CHEBI:15377"/>
        <dbReference type="ChEBI" id="CHEBI:15378"/>
        <dbReference type="ChEBI" id="CHEBI:15379"/>
        <dbReference type="ChEBI" id="CHEBI:57783"/>
        <dbReference type="ChEBI" id="CHEBI:58349"/>
        <dbReference type="ChEBI" id="CHEBI:145684"/>
        <dbReference type="ChEBI" id="CHEBI:145685"/>
    </reaction>
    <physiologicalReaction direction="left-to-right" evidence="7">
        <dbReference type="Rhea" id="RHEA:62349"/>
    </physiologicalReaction>
</comment>
<comment type="catalytic activity">
    <reaction evidence="7">
        <text>notoamide E + NADPH + O2 + H(+) = notoamide D + NADP(+) + H2O</text>
        <dbReference type="Rhea" id="RHEA:62352"/>
        <dbReference type="ChEBI" id="CHEBI:15377"/>
        <dbReference type="ChEBI" id="CHEBI:15378"/>
        <dbReference type="ChEBI" id="CHEBI:15379"/>
        <dbReference type="ChEBI" id="CHEBI:57783"/>
        <dbReference type="ChEBI" id="CHEBI:58349"/>
        <dbReference type="ChEBI" id="CHEBI:145684"/>
        <dbReference type="ChEBI" id="CHEBI:145686"/>
    </reaction>
    <physiologicalReaction direction="left-to-right" evidence="7">
        <dbReference type="Rhea" id="RHEA:62353"/>
    </physiologicalReaction>
</comment>
<comment type="cofactor">
    <cofactor evidence="10">
        <name>FAD</name>
        <dbReference type="ChEBI" id="CHEBI:57692"/>
    </cofactor>
</comment>
<comment type="pathway">
    <text evidence="7">Alkaloid biosynthesis.</text>
</comment>
<comment type="subcellular location">
    <subcellularLocation>
        <location evidence="3">Membrane</location>
        <topology evidence="3">Single-pass membrane protein</topology>
    </subcellularLocation>
</comment>
<comment type="biotechnology">
    <text evidence="5">Notoamides have been shown to exhibit antitumoral activities (PubMed:17304611). Notoamides A-C show moderate cytotoxicity against HeLa and L1210 cells with IC(50) values in the range of 22-52 mg/ml, but the IC(50) value of notoamide D is greater than 100 mg/ml (PubMed:17304611). Moreover, notoamide C induces G2/M-cell cycle arrest at a concentration of 6.3 mg/ml (PubMed:17304611).</text>
</comment>
<comment type="similarity">
    <text evidence="10">Belongs to the paxM FAD-dependent monooxygenase family.</text>
</comment>
<comment type="sequence caution" evidence="10">
    <conflict type="erroneous gene model prediction">
        <sequence resource="EMBL-CDS" id="ADM34135"/>
    </conflict>
</comment>
<keyword id="KW-0017">Alkaloid metabolism</keyword>
<keyword id="KW-0274">FAD</keyword>
<keyword id="KW-0285">Flavoprotein</keyword>
<keyword id="KW-0325">Glycoprotein</keyword>
<keyword id="KW-0472">Membrane</keyword>
<keyword id="KW-0503">Monooxygenase</keyword>
<keyword id="KW-0560">Oxidoreductase</keyword>
<keyword id="KW-0812">Transmembrane</keyword>
<keyword id="KW-1133">Transmembrane helix</keyword>
<protein>
    <recommendedName>
        <fullName evidence="9">Notoamide E oxidase notB</fullName>
        <ecNumber evidence="7">1.14.12.-</ecNumber>
    </recommendedName>
    <alternativeName>
        <fullName evidence="8">FAD-dependent monooxygenase notB</fullName>
    </alternativeName>
    <alternativeName>
        <fullName evidence="8">Notoamide biosynthesis cluster protein B</fullName>
    </alternativeName>
</protein>
<gene>
    <name evidence="8" type="primary">notB</name>
</gene>